<comment type="function">
    <text evidence="1">Catalyzes the sequential NAD-dependent oxidations of L-histidinol to L-histidinaldehyde and then to L-histidine.</text>
</comment>
<comment type="catalytic activity">
    <reaction evidence="1">
        <text>L-histidinol + 2 NAD(+) + H2O = L-histidine + 2 NADH + 3 H(+)</text>
        <dbReference type="Rhea" id="RHEA:20641"/>
        <dbReference type="ChEBI" id="CHEBI:15377"/>
        <dbReference type="ChEBI" id="CHEBI:15378"/>
        <dbReference type="ChEBI" id="CHEBI:57540"/>
        <dbReference type="ChEBI" id="CHEBI:57595"/>
        <dbReference type="ChEBI" id="CHEBI:57699"/>
        <dbReference type="ChEBI" id="CHEBI:57945"/>
        <dbReference type="EC" id="1.1.1.23"/>
    </reaction>
</comment>
<comment type="cofactor">
    <cofactor evidence="1">
        <name>Zn(2+)</name>
        <dbReference type="ChEBI" id="CHEBI:29105"/>
    </cofactor>
    <text evidence="1">Binds 1 zinc ion per subunit.</text>
</comment>
<comment type="pathway">
    <text evidence="1">Amino-acid biosynthesis; L-histidine biosynthesis; L-histidine from 5-phospho-alpha-D-ribose 1-diphosphate: step 9/9.</text>
</comment>
<comment type="similarity">
    <text evidence="1">Belongs to the histidinol dehydrogenase family.</text>
</comment>
<protein>
    <recommendedName>
        <fullName evidence="1">Histidinol dehydrogenase</fullName>
        <shortName evidence="1">HDH</shortName>
        <ecNumber evidence="1">1.1.1.23</ecNumber>
    </recommendedName>
</protein>
<feature type="chain" id="PRO_0000135834" description="Histidinol dehydrogenase">
    <location>
        <begin position="1"/>
        <end position="460"/>
    </location>
</feature>
<feature type="active site" description="Proton acceptor" evidence="1">
    <location>
        <position position="358"/>
    </location>
</feature>
<feature type="active site" description="Proton acceptor" evidence="1">
    <location>
        <position position="359"/>
    </location>
</feature>
<feature type="binding site" evidence="1">
    <location>
        <position position="269"/>
    </location>
    <ligand>
        <name>substrate</name>
    </ligand>
</feature>
<feature type="binding site" evidence="1">
    <location>
        <position position="291"/>
    </location>
    <ligand>
        <name>substrate</name>
    </ligand>
</feature>
<feature type="binding site" evidence="1">
    <location>
        <position position="291"/>
    </location>
    <ligand>
        <name>Zn(2+)</name>
        <dbReference type="ChEBI" id="CHEBI:29105"/>
    </ligand>
</feature>
<feature type="binding site" evidence="1">
    <location>
        <position position="294"/>
    </location>
    <ligand>
        <name>substrate</name>
    </ligand>
</feature>
<feature type="binding site" evidence="1">
    <location>
        <position position="294"/>
    </location>
    <ligand>
        <name>Zn(2+)</name>
        <dbReference type="ChEBI" id="CHEBI:29105"/>
    </ligand>
</feature>
<feature type="binding site" evidence="1">
    <location>
        <position position="359"/>
    </location>
    <ligand>
        <name>substrate</name>
    </ligand>
</feature>
<feature type="binding site" evidence="1">
    <location>
        <position position="392"/>
    </location>
    <ligand>
        <name>substrate</name>
    </ligand>
</feature>
<feature type="binding site" evidence="1">
    <location>
        <position position="392"/>
    </location>
    <ligand>
        <name>Zn(2+)</name>
        <dbReference type="ChEBI" id="CHEBI:29105"/>
    </ligand>
</feature>
<feature type="binding site" evidence="1">
    <location>
        <position position="446"/>
    </location>
    <ligand>
        <name>substrate</name>
    </ligand>
</feature>
<feature type="binding site" evidence="1">
    <location>
        <position position="451"/>
    </location>
    <ligand>
        <name>substrate</name>
    </ligand>
</feature>
<feature type="binding site" evidence="1">
    <location>
        <position position="451"/>
    </location>
    <ligand>
        <name>Zn(2+)</name>
        <dbReference type="ChEBI" id="CHEBI:29105"/>
    </ligand>
</feature>
<dbReference type="EC" id="1.1.1.23" evidence="1"/>
<dbReference type="EMBL" id="BX294135">
    <property type="protein sequence ID" value="CAD72173.1"/>
    <property type="molecule type" value="Genomic_DNA"/>
</dbReference>
<dbReference type="RefSeq" id="NP_864492.1">
    <property type="nucleotide sequence ID" value="NC_005027.1"/>
</dbReference>
<dbReference type="RefSeq" id="WP_011118440.1">
    <property type="nucleotide sequence ID" value="NC_005027.1"/>
</dbReference>
<dbReference type="SMR" id="Q7UX39"/>
<dbReference type="FunCoup" id="Q7UX39">
    <property type="interactions" value="545"/>
</dbReference>
<dbReference type="STRING" id="243090.RB1584"/>
<dbReference type="EnsemblBacteria" id="CAD72173">
    <property type="protein sequence ID" value="CAD72173"/>
    <property type="gene ID" value="RB1584"/>
</dbReference>
<dbReference type="KEGG" id="rba:RB1584"/>
<dbReference type="PATRIC" id="fig|243090.15.peg.740"/>
<dbReference type="eggNOG" id="COG0141">
    <property type="taxonomic scope" value="Bacteria"/>
</dbReference>
<dbReference type="HOGENOM" id="CLU_006732_3_3_0"/>
<dbReference type="InParanoid" id="Q7UX39"/>
<dbReference type="OrthoDB" id="9805269at2"/>
<dbReference type="UniPathway" id="UPA00031">
    <property type="reaction ID" value="UER00014"/>
</dbReference>
<dbReference type="Proteomes" id="UP000001025">
    <property type="component" value="Chromosome"/>
</dbReference>
<dbReference type="GO" id="GO:0005737">
    <property type="term" value="C:cytoplasm"/>
    <property type="evidence" value="ECO:0000318"/>
    <property type="project" value="GO_Central"/>
</dbReference>
<dbReference type="GO" id="GO:0005829">
    <property type="term" value="C:cytosol"/>
    <property type="evidence" value="ECO:0000318"/>
    <property type="project" value="GO_Central"/>
</dbReference>
<dbReference type="GO" id="GO:0004399">
    <property type="term" value="F:histidinol dehydrogenase activity"/>
    <property type="evidence" value="ECO:0000318"/>
    <property type="project" value="GO_Central"/>
</dbReference>
<dbReference type="GO" id="GO:0051287">
    <property type="term" value="F:NAD binding"/>
    <property type="evidence" value="ECO:0007669"/>
    <property type="project" value="InterPro"/>
</dbReference>
<dbReference type="GO" id="GO:0008270">
    <property type="term" value="F:zinc ion binding"/>
    <property type="evidence" value="ECO:0007669"/>
    <property type="project" value="UniProtKB-UniRule"/>
</dbReference>
<dbReference type="GO" id="GO:0000105">
    <property type="term" value="P:L-histidine biosynthetic process"/>
    <property type="evidence" value="ECO:0000318"/>
    <property type="project" value="GO_Central"/>
</dbReference>
<dbReference type="CDD" id="cd06572">
    <property type="entry name" value="Histidinol_dh"/>
    <property type="match status" value="1"/>
</dbReference>
<dbReference type="FunFam" id="3.40.50.1980:FF:000001">
    <property type="entry name" value="Histidinol dehydrogenase"/>
    <property type="match status" value="1"/>
</dbReference>
<dbReference type="Gene3D" id="1.20.5.1300">
    <property type="match status" value="1"/>
</dbReference>
<dbReference type="Gene3D" id="3.40.50.1980">
    <property type="entry name" value="Nitrogenase molybdenum iron protein domain"/>
    <property type="match status" value="2"/>
</dbReference>
<dbReference type="HAMAP" id="MF_01024">
    <property type="entry name" value="HisD"/>
    <property type="match status" value="1"/>
</dbReference>
<dbReference type="InterPro" id="IPR016161">
    <property type="entry name" value="Ald_DH/histidinol_DH"/>
</dbReference>
<dbReference type="InterPro" id="IPR001692">
    <property type="entry name" value="Histidinol_DH_CS"/>
</dbReference>
<dbReference type="InterPro" id="IPR022695">
    <property type="entry name" value="Histidinol_DH_monofunct"/>
</dbReference>
<dbReference type="InterPro" id="IPR012131">
    <property type="entry name" value="Hstdl_DH"/>
</dbReference>
<dbReference type="NCBIfam" id="TIGR00069">
    <property type="entry name" value="hisD"/>
    <property type="match status" value="1"/>
</dbReference>
<dbReference type="PANTHER" id="PTHR21256:SF2">
    <property type="entry name" value="HISTIDINE BIOSYNTHESIS TRIFUNCTIONAL PROTEIN"/>
    <property type="match status" value="1"/>
</dbReference>
<dbReference type="PANTHER" id="PTHR21256">
    <property type="entry name" value="HISTIDINOL DEHYDROGENASE HDH"/>
    <property type="match status" value="1"/>
</dbReference>
<dbReference type="Pfam" id="PF00815">
    <property type="entry name" value="Histidinol_dh"/>
    <property type="match status" value="1"/>
</dbReference>
<dbReference type="PIRSF" id="PIRSF000099">
    <property type="entry name" value="Histidinol_dh"/>
    <property type="match status" value="1"/>
</dbReference>
<dbReference type="PRINTS" id="PR00083">
    <property type="entry name" value="HOLDHDRGNASE"/>
</dbReference>
<dbReference type="SUPFAM" id="SSF53720">
    <property type="entry name" value="ALDH-like"/>
    <property type="match status" value="1"/>
</dbReference>
<dbReference type="PROSITE" id="PS00611">
    <property type="entry name" value="HISOL_DEHYDROGENASE"/>
    <property type="match status" value="1"/>
</dbReference>
<proteinExistence type="inferred from homology"/>
<accession>Q7UX39</accession>
<organism>
    <name type="scientific">Rhodopirellula baltica (strain DSM 10527 / NCIMB 13988 / SH1)</name>
    <dbReference type="NCBI Taxonomy" id="243090"/>
    <lineage>
        <taxon>Bacteria</taxon>
        <taxon>Pseudomonadati</taxon>
        <taxon>Planctomycetota</taxon>
        <taxon>Planctomycetia</taxon>
        <taxon>Pirellulales</taxon>
        <taxon>Pirellulaceae</taxon>
        <taxon>Rhodopirellula</taxon>
    </lineage>
</organism>
<keyword id="KW-0028">Amino-acid biosynthesis</keyword>
<keyword id="KW-0368">Histidine biosynthesis</keyword>
<keyword id="KW-0479">Metal-binding</keyword>
<keyword id="KW-0520">NAD</keyword>
<keyword id="KW-0560">Oxidoreductase</keyword>
<keyword id="KW-1185">Reference proteome</keyword>
<keyword id="KW-0862">Zinc</keyword>
<gene>
    <name evidence="1" type="primary">hisD</name>
    <name type="ordered locus">RB1584</name>
</gene>
<evidence type="ECO:0000255" key="1">
    <source>
        <dbReference type="HAMAP-Rule" id="MF_01024"/>
    </source>
</evidence>
<reference key="1">
    <citation type="journal article" date="2003" name="Proc. Natl. Acad. Sci. U.S.A.">
        <title>Complete genome sequence of the marine planctomycete Pirellula sp. strain 1.</title>
        <authorList>
            <person name="Gloeckner F.O."/>
            <person name="Kube M."/>
            <person name="Bauer M."/>
            <person name="Teeling H."/>
            <person name="Lombardot T."/>
            <person name="Ludwig W."/>
            <person name="Gade D."/>
            <person name="Beck A."/>
            <person name="Borzym K."/>
            <person name="Heitmann K."/>
            <person name="Rabus R."/>
            <person name="Schlesner H."/>
            <person name="Amann R."/>
            <person name="Reinhardt R."/>
        </authorList>
    </citation>
    <scope>NUCLEOTIDE SEQUENCE [LARGE SCALE GENOMIC DNA]</scope>
    <source>
        <strain>DSM 10527 / NCIMB 13988 / SH1</strain>
    </source>
</reference>
<sequence length="460" mass="48514">MFRIVAVPEFSIQTVDARDPSSSEAAETLAALREKLSPRGDLVSPRGRELTLKVFGKALSPIEVVETICKDVQSQGTEALLRYTKSLDGAELTADTLRVPEEDLKAAHAVADPKLIETIGRIRDNIATFQSAILHRDVTITPRPGVSLTQRYVPIPRVGICVPGGAAAYPSTVMMTAIPAQVAGVDEIAVVAPPTPFGAYNTDMLATCHELGIKEVYRCGGAQAVAAMAYGCDALPAVDKIVGPGNLFVALAKKHVFGTVDIDSFAGPSEVIVIADESANAAFVASDLLAQAEHSPGSAILITWDESLLTSVQAELSRQLGELERGDLARDALSDFGALVLARDADHACELTDSFAPEHLQIETREPESLIAKIRHSGAAFLGHHTPVALGDYAAGPSHVLPTGGTCRWAAGLSANSFLRSGSVTQFDQSALSAIAQDVITVAEKEGLTAHARSISIRTE</sequence>
<name>HISX_RHOBA</name>